<name>HCMA_AQUTE</name>
<keyword id="KW-0002">3D-structure</keyword>
<keyword id="KW-0413">Isomerase</keyword>
<comment type="function">
    <text evidence="1 2">Together with HcmB, catalyzes the isomerization of 2-hydroxyisobutyryl-CoA and 3-hydroxybutyryl-CoA. Is specific for 2-hydroxyisobutyryl-CoA and (S)-3-hydroxybutyryl-CoA, and shows only very low activity with (R)-3-hydroxybutyryl-CoA, isobutyryl-CoA and butyryl-CoA (PubMed:22433853, PubMed:25720495). In vitro, can isomerize pivalyl-CoA and isovaleryl-CoA, with much lower efficiency (PubMed:25720495). Plays a central role in the degradation of substrates bearing a tert-butyl moiety, such as the fuel oxygenate methyl tert-butyl ether (MTBE) and its metabolites (PubMed:22433853).</text>
</comment>
<comment type="catalytic activity">
    <reaction evidence="1 2">
        <text>2-hydroxyisobutanoyl-CoA = (3S)-3-hydroxybutanoyl-CoA</text>
        <dbReference type="Rhea" id="RHEA:49592"/>
        <dbReference type="ChEBI" id="CHEBI:57316"/>
        <dbReference type="ChEBI" id="CHEBI:131780"/>
        <dbReference type="EC" id="5.4.99.64"/>
    </reaction>
    <physiologicalReaction direction="left-to-right" evidence="1">
        <dbReference type="Rhea" id="RHEA:49593"/>
    </physiologicalReaction>
</comment>
<comment type="biophysicochemical properties">
    <kinetics>
        <KM evidence="1">128 uM for (S)-3-hydroxybutyryl-CoA</KM>
        <KM evidence="1">104 uM for 2-hydroxyisobutyryl-CoA</KM>
        <KM evidence="1">1660 uM for (R)-3-hydroxybutyryl-CoA</KM>
        <KM evidence="1">3340 uM for butyryl-CoA</KM>
        <KM evidence="1">550 uM for isobutyryl-CoA</KM>
        <KM evidence="2">374 uM for pivalyl-CoA</KM>
        <KM evidence="2">288 uM for isovaleryl-CoA</KM>
        <Vmax evidence="1">140.0 nmol/min/mg enzyme with (S)-3-hydroxybutyryl-CoA as substrate</Vmax>
        <Vmax evidence="1">36.0 nmol/min/mg enzyme with 2-hydroxyisobutyryl-CoA as substrate</Vmax>
        <Vmax evidence="1">2.4 nmol/min/mg enzyme with (R)-3-hydroxybutyryl-CoA as substrate</Vmax>
        <Vmax evidence="1">2.4 nmol/min/mg enzyme with butyryl-CoA as substrate</Vmax>
        <Vmax evidence="1">0.67 nmol/min/mg enzyme with isobutyryl-CoA as substrate</Vmax>
        <Vmax evidence="2">11.8 nmol/min/mg enzyme with pivalyl-CoA as substrate</Vmax>
        <Vmax evidence="2">8.2 nmol/min/mg enzyme with isovaleryl-CoA as substrate</Vmax>
        <text evidence="1 2">kcat is 12 min(-1) with (S)-3-hydroxybutyryl-CoA as substrate. kcat is 3.0 min(-1) with 2-hydroxyisobutyryl-CoA as substrate. kcat is 0.20 min(-1) with (R)-3-hydroxybutyryl-CoA as substrate. kcat is 0.20 min(-1) with butyryl-CoA as substrate. kcat is 0.06 min(-1) with isobutyryl-CoA as substrate (PubMed:22433853). kcat is 0.98 min(-1) with pivalyl-CoA as substrate. kcat is 0.68 min(-1) with isovaleryl-CoA as substrate (PubMed:25720495).</text>
    </kinetics>
    <phDependence>
        <text evidence="1">Optimum pH is 6.6.</text>
    </phDependence>
    <temperatureDependence>
        <text evidence="1">Optimum temperature is 30 degrees Celsius.</text>
    </temperatureDependence>
</comment>
<comment type="subunit">
    <text evidence="1 2">Homotetramer composed of two large substrate-binding subunits (HcmA) and two small cobalamin-binding subunits (HcmB).</text>
</comment>
<comment type="disruption phenotype">
    <text evidence="1">Insertion mutant cannot grow on 2-hydroxyisobutyric acid (2-HIBA).</text>
</comment>
<comment type="similarity">
    <text evidence="4">Belongs to the acyl-CoA mutase large subunit family.</text>
</comment>
<reference key="1">
    <citation type="journal article" date="2012" name="J. Biol. Chem.">
        <title>Bacterial acyl-CoA mutase specifically catalyzes coenzyme B12-dependent isomerization of 2-hydroxyisobutyryl-CoA and (S)-3-hydroxybutyryl-CoA.</title>
        <authorList>
            <person name="Yaneva N."/>
            <person name="Schuster J."/>
            <person name="Schafer F."/>
            <person name="Lede V."/>
            <person name="Przybylski D."/>
            <person name="Paproth T."/>
            <person name="Harms H."/>
            <person name="Muller R.H."/>
            <person name="Rohwerder T."/>
        </authorList>
    </citation>
    <scope>NUCLEOTIDE SEQUENCE [GENOMIC DNA]</scope>
    <scope>FUNCTION</scope>
    <scope>CATALYTIC ACTIVITY</scope>
    <scope>BIOPHYSICOCHEMICAL PROPERTIES</scope>
    <scope>SUBUNIT</scope>
    <scope>DISRUPTION PHENOTYPE</scope>
    <scope>MUTAGENESIS OF ILE-90</scope>
    <source>
        <strain>L108</strain>
    </source>
</reference>
<reference evidence="6" key="2">
    <citation type="journal article" date="2015" name="J. Biol. Chem.">
        <title>Structural basis of the stereospecificity of bacterial B12-dependent 2-hydroxyisobutyryl-CoA mutase.</title>
        <authorList>
            <person name="Kurteva-Yaneva N."/>
            <person name="Zahn M."/>
            <person name="Weichler M.T."/>
            <person name="Starke R."/>
            <person name="Harms H."/>
            <person name="Muller R.H."/>
            <person name="Strater N."/>
            <person name="Rohwerder T."/>
        </authorList>
    </citation>
    <scope>X-RAY CRYSTALLOGRAPHY (2.50 ANGSTROMS) IN COMPLEX WITH HCMB; 2-HYDROXYISOBUTANOYL-COA; 3-HYDROXYBUTANOYL-COA AND COBALAMIN</scope>
    <scope>FUNCTION</scope>
    <scope>CATALYTIC ACTIVITY</scope>
    <scope>BIOPHYSICOCHEMICAL PROPERTIES</scope>
    <scope>SUBUNIT</scope>
    <scope>MUTAGENESIS OF ILE-90 AND ASP-117</scope>
    <source>
        <strain>L108</strain>
    </source>
</reference>
<protein>
    <recommendedName>
        <fullName evidence="4">2-hydroxyisobutanoyl-CoA mutase large subunit</fullName>
        <ecNumber evidence="1 2">5.4.99.64</ecNumber>
    </recommendedName>
    <alternativeName>
        <fullName evidence="3">2-hydroxyisobutyryl-CoA mutase large subunit</fullName>
        <shortName evidence="3">HCM large subunit</shortName>
    </alternativeName>
</protein>
<organism>
    <name type="scientific">Aquincola tertiaricarbonis</name>
    <dbReference type="NCBI Taxonomy" id="391953"/>
    <lineage>
        <taxon>Bacteria</taxon>
        <taxon>Pseudomonadati</taxon>
        <taxon>Pseudomonadota</taxon>
        <taxon>Betaproteobacteria</taxon>
        <taxon>Burkholderiales</taxon>
        <taxon>Sphaerotilaceae</taxon>
        <taxon>Aquincola</taxon>
    </lineage>
</organism>
<accession>I3VE77</accession>
<feature type="chain" id="PRO_0000455118" description="2-hydroxyisobutanoyl-CoA mutase large subunit">
    <location>
        <begin position="1"/>
        <end position="562"/>
    </location>
</feature>
<feature type="binding site" evidence="2 6">
    <location>
        <begin position="76"/>
        <end position="79"/>
    </location>
    <ligand>
        <name>(3S)-3-hydroxybutanoyl-CoA</name>
        <dbReference type="ChEBI" id="CHEBI:57316"/>
    </ligand>
</feature>
<feature type="binding site" evidence="2 6">
    <location>
        <begin position="86"/>
        <end position="88"/>
    </location>
    <ligand>
        <name>(3S)-3-hydroxybutanoyl-CoA</name>
        <dbReference type="ChEBI" id="CHEBI:57316"/>
    </ligand>
</feature>
<feature type="binding site" evidence="2 6">
    <location>
        <position position="117"/>
    </location>
    <ligand>
        <name>(3S)-3-hydroxybutanoyl-CoA</name>
        <dbReference type="ChEBI" id="CHEBI:57316"/>
    </ligand>
</feature>
<feature type="binding site" evidence="2 6">
    <location>
        <begin position="196"/>
        <end position="198"/>
    </location>
    <ligand>
        <name>(3S)-3-hydroxybutanoyl-CoA</name>
        <dbReference type="ChEBI" id="CHEBI:57316"/>
    </ligand>
</feature>
<feature type="binding site" evidence="2 6">
    <location>
        <position position="235"/>
    </location>
    <ligand>
        <name>(3S)-3-hydroxybutanoyl-CoA</name>
        <dbReference type="ChEBI" id="CHEBI:57316"/>
    </ligand>
</feature>
<feature type="binding site" evidence="2 6">
    <location>
        <position position="240"/>
    </location>
    <ligand>
        <name>(3S)-3-hydroxybutanoyl-CoA</name>
        <dbReference type="ChEBI" id="CHEBI:57316"/>
    </ligand>
</feature>
<feature type="binding site" evidence="2 6">
    <location>
        <position position="245"/>
    </location>
    <ligand>
        <name>(3S)-3-hydroxybutanoyl-CoA</name>
        <dbReference type="ChEBI" id="CHEBI:57316"/>
    </ligand>
</feature>
<feature type="binding site" evidence="2 6">
    <location>
        <position position="284"/>
    </location>
    <ligand>
        <name>(3S)-3-hydroxybutanoyl-CoA</name>
        <dbReference type="ChEBI" id="CHEBI:57316"/>
    </ligand>
</feature>
<feature type="site" description="Important for the stereospecificity of catalysis" evidence="5">
    <location>
        <position position="117"/>
    </location>
</feature>
<feature type="mutagenesis site" description="6-fold decrease in catalytic efficiency with 2-hydroxyisobutyryl-CoA as substrate. 320-fold decrease in catalytic efficiency with (S)-3-hydroxybuytryl-CoA as substrate. 6-fold increase in catalytic efficiency with (R)-3-hydroxybutyryl-CoA as substrate. No change in catalytic efficiencies with pivalyl-CoA and isovaleryl-CoA as substrates." evidence="2">
    <original>I</original>
    <variation>A</variation>
    <location>
        <position position="90"/>
    </location>
</feature>
<feature type="mutagenesis site" description="Loss of activity." evidence="1">
    <original>I</original>
    <variation>F</variation>
    <variation>Y</variation>
    <location>
        <position position="90"/>
    </location>
</feature>
<feature type="mutagenesis site" description="37-fold decrease in catalytic efficiency with 2-hydroxyisobutyryl-CoA as substrate. 290-fold decrease in catalytic efficiency with (S)-3-hydroxybuytryl-CoA as substrate. Does not show any significant activities with pivalyl-CoA and isovaleryl-CoA." evidence="2">
    <original>I</original>
    <variation>L</variation>
    <location>
        <position position="90"/>
    </location>
</feature>
<feature type="mutagenesis site" description="100-fold decrease in catalytic efficiency with (S)-3-hydroxybuytryl-CoA as substrate. No change in catalytic efficiencies with pivalyl-CoA and isovaleryl-CoA as substrates." evidence="1">
    <original>I</original>
    <variation>V</variation>
    <location>
        <position position="90"/>
    </location>
</feature>
<feature type="mutagenesis site" description="2-fold increase in catalytic efficiency with 2-hydroxyisobutyryl-CoA as substrate. Small increase in catalytic efficiency with (S)-3-hydroxybuytryl-CoA as substrate. 1800-fold increase in catalytic efficiency with (R)-3-hydroxybutyryl-CoA as substrate." evidence="2">
    <original>D</original>
    <variation>A</variation>
    <location>
        <position position="117"/>
    </location>
</feature>
<feature type="mutagenesis site" description="1.5-fold increase in catalytic efficiency with 2-hydroxyisobutyryl-CoA as substrate. 3-fold decrease in catalytic efficiency with (S)-3-hydroxybuytryl-CoA as substrate. 1300-fold increase in catalytic efficiency with (R)-3-hydroxybutyryl-CoA as substrate. 74-fold increase in catalytic efficiency with pivalyl-CoA as substrate." evidence="2">
    <original>D</original>
    <variation>V</variation>
    <location>
        <position position="117"/>
    </location>
</feature>
<feature type="helix" evidence="7">
    <location>
        <begin position="6"/>
        <end position="21"/>
    </location>
</feature>
<feature type="helix" evidence="7">
    <location>
        <begin position="23"/>
        <end position="30"/>
    </location>
</feature>
<feature type="strand" evidence="7">
    <location>
        <begin position="36"/>
        <end position="39"/>
    </location>
</feature>
<feature type="helix" evidence="7">
    <location>
        <begin position="52"/>
        <end position="55"/>
    </location>
</feature>
<feature type="helix" evidence="7">
    <location>
        <begin position="60"/>
        <end position="62"/>
    </location>
</feature>
<feature type="strand" evidence="7">
    <location>
        <begin position="75"/>
        <end position="78"/>
    </location>
</feature>
<feature type="helix" evidence="7">
    <location>
        <begin position="79"/>
        <end position="81"/>
    </location>
</feature>
<feature type="helix" evidence="7">
    <location>
        <begin position="96"/>
        <end position="108"/>
    </location>
</feature>
<feature type="strand" evidence="7">
    <location>
        <begin position="113"/>
        <end position="118"/>
    </location>
</feature>
<feature type="helix" evidence="7">
    <location>
        <begin position="120"/>
        <end position="124"/>
    </location>
</feature>
<feature type="helix" evidence="7">
    <location>
        <begin position="131"/>
        <end position="133"/>
    </location>
</feature>
<feature type="turn" evidence="7">
    <location>
        <begin position="137"/>
        <end position="139"/>
    </location>
</feature>
<feature type="strand" evidence="7">
    <location>
        <begin position="140"/>
        <end position="142"/>
    </location>
</feature>
<feature type="helix" evidence="7">
    <location>
        <begin position="147"/>
        <end position="153"/>
    </location>
</feature>
<feature type="turn" evidence="7">
    <location>
        <begin position="154"/>
        <end position="156"/>
    </location>
</feature>
<feature type="turn" evidence="7">
    <location>
        <begin position="159"/>
        <end position="161"/>
    </location>
</feature>
<feature type="strand" evidence="7">
    <location>
        <begin position="164"/>
        <end position="167"/>
    </location>
</feature>
<feature type="helix" evidence="7">
    <location>
        <begin position="172"/>
        <end position="185"/>
    </location>
</feature>
<feature type="helix" evidence="7">
    <location>
        <begin position="190"/>
        <end position="192"/>
    </location>
</feature>
<feature type="strand" evidence="7">
    <location>
        <begin position="195"/>
        <end position="197"/>
    </location>
</feature>
<feature type="helix" evidence="7">
    <location>
        <begin position="202"/>
        <end position="206"/>
    </location>
</feature>
<feature type="helix" evidence="7">
    <location>
        <begin position="215"/>
        <end position="232"/>
    </location>
</feature>
<feature type="helix" evidence="7">
    <location>
        <begin position="244"/>
        <end position="248"/>
    </location>
</feature>
<feature type="helix" evidence="7">
    <location>
        <begin position="253"/>
        <end position="272"/>
    </location>
</feature>
<feature type="turn" evidence="7">
    <location>
        <begin position="273"/>
        <end position="275"/>
    </location>
</feature>
<feature type="helix" evidence="7">
    <location>
        <begin position="278"/>
        <end position="280"/>
    </location>
</feature>
<feature type="helix" evidence="7">
    <location>
        <begin position="282"/>
        <end position="284"/>
    </location>
</feature>
<feature type="strand" evidence="7">
    <location>
        <begin position="287"/>
        <end position="291"/>
    </location>
</feature>
<feature type="helix" evidence="7">
    <location>
        <begin position="295"/>
        <end position="315"/>
    </location>
</feature>
<feature type="helix" evidence="7">
    <location>
        <begin position="322"/>
        <end position="324"/>
    </location>
</feature>
<feature type="strand" evidence="7">
    <location>
        <begin position="329"/>
        <end position="333"/>
    </location>
</feature>
<feature type="helix" evidence="7">
    <location>
        <begin position="335"/>
        <end position="337"/>
    </location>
</feature>
<feature type="helix" evidence="7">
    <location>
        <begin position="343"/>
        <end position="345"/>
    </location>
</feature>
<feature type="helix" evidence="7">
    <location>
        <begin position="346"/>
        <end position="359"/>
    </location>
</feature>
<feature type="strand" evidence="7">
    <location>
        <begin position="363"/>
        <end position="366"/>
    </location>
</feature>
<feature type="turn" evidence="7">
    <location>
        <begin position="370"/>
        <end position="374"/>
    </location>
</feature>
<feature type="helix" evidence="7">
    <location>
        <begin position="379"/>
        <end position="394"/>
    </location>
</feature>
<feature type="strand" evidence="7">
    <location>
        <begin position="400"/>
        <end position="403"/>
    </location>
</feature>
<feature type="turn" evidence="7">
    <location>
        <begin position="404"/>
        <end position="407"/>
    </location>
</feature>
<feature type="helix" evidence="7">
    <location>
        <begin position="409"/>
        <end position="431"/>
    </location>
</feature>
<feature type="helix" evidence="7">
    <location>
        <begin position="435"/>
        <end position="440"/>
    </location>
</feature>
<feature type="helix" evidence="7">
    <location>
        <begin position="443"/>
        <end position="460"/>
    </location>
</feature>
<feature type="turn" evidence="7">
    <location>
        <begin position="467"/>
        <end position="469"/>
    </location>
</feature>
<feature type="strand" evidence="7">
    <location>
        <begin position="470"/>
        <end position="472"/>
    </location>
</feature>
<feature type="helix" evidence="7">
    <location>
        <begin position="490"/>
        <end position="504"/>
    </location>
</feature>
<feature type="helix" evidence="7">
    <location>
        <begin position="507"/>
        <end position="521"/>
    </location>
</feature>
<feature type="helix" evidence="7">
    <location>
        <begin position="529"/>
        <end position="538"/>
    </location>
</feature>
<feature type="helix" evidence="7">
    <location>
        <begin position="542"/>
        <end position="553"/>
    </location>
</feature>
<sequence length="562" mass="63414">MTWLEPQIKSQLQSERKDWEANEVGAFLKKAPERKEQFHTIGDFPVQRTYTAADIADTPLEDIGLPGRYPFTRGPYPTMYRSRTWTMRQIAGFGTGEDTNKRFKYLIAQGQTGISTDFDMPTLMGYDSDHPMSDGEVGREGVAIDTLADMEALLADIDLEKISVSFTINPSAWILLAMYVALGEKRGYDLNKLSGTVQADILKEYMAQKEYIYPIAPSVRIVRDIITYSAKNLKRYNPINISGYHISEAGSSPLQEAAFTLANLITYVNEVTKTGMHVDEFAPRLAFFFVSQGDFFEEVAKFRALRRCYAKIMKERFGARNPESMRLRFHCQTAAATLTKPQYMVNVVRTSLQALSAVLGGAQSLHTNGYDEAFAIPTEDAMKMALRTQQIIAEESGVADVIDPLGGSYYVEALTTEYEKKIFEILEEVEKRGGTIKLIEQGWFQKQIADFAYETALRKQSGQKPVIGVNRFVENEEDVKIEIHPYDNTTAERQISRTRRVRAERDEAKVQAMLDQLVAVAKDESQNLMPLTIELVKAGATMGDIVEKLKGIWGTYRETPVF</sequence>
<gene>
    <name evidence="3" type="primary">hcmA</name>
</gene>
<dbReference type="EC" id="5.4.99.64" evidence="1 2"/>
<dbReference type="EMBL" id="JQ708092">
    <property type="protein sequence ID" value="AFK77668.1"/>
    <property type="molecule type" value="Genomic_DNA"/>
</dbReference>
<dbReference type="PDB" id="4R3U">
    <property type="method" value="X-ray"/>
    <property type="resolution" value="2.50 A"/>
    <property type="chains" value="A/B=1-562"/>
</dbReference>
<dbReference type="PDBsum" id="4R3U"/>
<dbReference type="SMR" id="I3VE77"/>
<dbReference type="KEGG" id="ag:AFK77668"/>
<dbReference type="BioCyc" id="MetaCyc:MONOMER-19834"/>
<dbReference type="BRENDA" id="5.4.99.64">
    <property type="organism ID" value="14508"/>
</dbReference>
<dbReference type="EvolutionaryTrace" id="I3VE77"/>
<dbReference type="GO" id="GO:0031419">
    <property type="term" value="F:cobalamin binding"/>
    <property type="evidence" value="ECO:0007669"/>
    <property type="project" value="InterPro"/>
</dbReference>
<dbReference type="GO" id="GO:0004494">
    <property type="term" value="F:methylmalonyl-CoA mutase activity"/>
    <property type="evidence" value="ECO:0007669"/>
    <property type="project" value="InterPro"/>
</dbReference>
<dbReference type="CDD" id="cd03680">
    <property type="entry name" value="MM_CoA_mutase_ICM_like"/>
    <property type="match status" value="1"/>
</dbReference>
<dbReference type="Gene3D" id="3.20.20.240">
    <property type="entry name" value="Methylmalonyl-CoA mutase"/>
    <property type="match status" value="1"/>
</dbReference>
<dbReference type="InterPro" id="IPR016176">
    <property type="entry name" value="Cbl-dep_enz_cat"/>
</dbReference>
<dbReference type="InterPro" id="IPR006099">
    <property type="entry name" value="MeMalonylCoA_mutase_a/b_cat"/>
</dbReference>
<dbReference type="InterPro" id="IPR006098">
    <property type="entry name" value="MMCoA_mutase_a_cat"/>
</dbReference>
<dbReference type="NCBIfam" id="TIGR00641">
    <property type="entry name" value="acid_CoA_mut_N"/>
    <property type="match status" value="1"/>
</dbReference>
<dbReference type="PANTHER" id="PTHR48101:SF1">
    <property type="entry name" value="METHYLMALONYL-COA MUTASE, LARGE SUBUNIT"/>
    <property type="match status" value="1"/>
</dbReference>
<dbReference type="PANTHER" id="PTHR48101">
    <property type="entry name" value="METHYLMALONYL-COA MUTASE, MITOCHONDRIAL-RELATED"/>
    <property type="match status" value="1"/>
</dbReference>
<dbReference type="Pfam" id="PF01642">
    <property type="entry name" value="MM_CoA_mutase"/>
    <property type="match status" value="1"/>
</dbReference>
<dbReference type="SUPFAM" id="SSF51703">
    <property type="entry name" value="Cobalamin (vitamin B12)-dependent enzymes"/>
    <property type="match status" value="1"/>
</dbReference>
<proteinExistence type="evidence at protein level"/>
<evidence type="ECO:0000269" key="1">
    <source>
    </source>
</evidence>
<evidence type="ECO:0000269" key="2">
    <source>
    </source>
</evidence>
<evidence type="ECO:0000303" key="3">
    <source>
    </source>
</evidence>
<evidence type="ECO:0000305" key="4"/>
<evidence type="ECO:0000305" key="5">
    <source>
    </source>
</evidence>
<evidence type="ECO:0007744" key="6">
    <source>
        <dbReference type="PDB" id="4R3U"/>
    </source>
</evidence>
<evidence type="ECO:0007829" key="7">
    <source>
        <dbReference type="PDB" id="4R3U"/>
    </source>
</evidence>